<organism>
    <name type="scientific">Corynebacterium diphtheriae (strain ATCC 700971 / NCTC 13129 / Biotype gravis)</name>
    <dbReference type="NCBI Taxonomy" id="257309"/>
    <lineage>
        <taxon>Bacteria</taxon>
        <taxon>Bacillati</taxon>
        <taxon>Actinomycetota</taxon>
        <taxon>Actinomycetes</taxon>
        <taxon>Mycobacteriales</taxon>
        <taxon>Corynebacteriaceae</taxon>
        <taxon>Corynebacterium</taxon>
    </lineage>
</organism>
<name>RSMH_CORDI</name>
<dbReference type="EC" id="2.1.1.199" evidence="1"/>
<dbReference type="EMBL" id="BX248358">
    <property type="protein sequence ID" value="CAE50131.1"/>
    <property type="molecule type" value="Genomic_DNA"/>
</dbReference>
<dbReference type="RefSeq" id="WP_010935190.1">
    <property type="nucleotide sequence ID" value="NC_002935.2"/>
</dbReference>
<dbReference type="SMR" id="P60395"/>
<dbReference type="STRING" id="257309.DIP1606"/>
<dbReference type="KEGG" id="cdi:DIP1606"/>
<dbReference type="HOGENOM" id="CLU_038422_0_0_11"/>
<dbReference type="Proteomes" id="UP000002198">
    <property type="component" value="Chromosome"/>
</dbReference>
<dbReference type="GO" id="GO:0005737">
    <property type="term" value="C:cytoplasm"/>
    <property type="evidence" value="ECO:0007669"/>
    <property type="project" value="UniProtKB-SubCell"/>
</dbReference>
<dbReference type="GO" id="GO:0071424">
    <property type="term" value="F:rRNA (cytosine-N4-)-methyltransferase activity"/>
    <property type="evidence" value="ECO:0007669"/>
    <property type="project" value="UniProtKB-UniRule"/>
</dbReference>
<dbReference type="GO" id="GO:0070475">
    <property type="term" value="P:rRNA base methylation"/>
    <property type="evidence" value="ECO:0007669"/>
    <property type="project" value="UniProtKB-UniRule"/>
</dbReference>
<dbReference type="FunFam" id="1.10.150.170:FF:000001">
    <property type="entry name" value="Ribosomal RNA small subunit methyltransferase H"/>
    <property type="match status" value="1"/>
</dbReference>
<dbReference type="Gene3D" id="1.10.150.170">
    <property type="entry name" value="Putative methyltransferase TM0872, insert domain"/>
    <property type="match status" value="1"/>
</dbReference>
<dbReference type="Gene3D" id="3.40.50.150">
    <property type="entry name" value="Vaccinia Virus protein VP39"/>
    <property type="match status" value="1"/>
</dbReference>
<dbReference type="HAMAP" id="MF_01007">
    <property type="entry name" value="16SrRNA_methyltr_H"/>
    <property type="match status" value="1"/>
</dbReference>
<dbReference type="InterPro" id="IPR002903">
    <property type="entry name" value="RsmH"/>
</dbReference>
<dbReference type="InterPro" id="IPR023397">
    <property type="entry name" value="SAM-dep_MeTrfase_MraW_recog"/>
</dbReference>
<dbReference type="InterPro" id="IPR029063">
    <property type="entry name" value="SAM-dependent_MTases_sf"/>
</dbReference>
<dbReference type="NCBIfam" id="TIGR00006">
    <property type="entry name" value="16S rRNA (cytosine(1402)-N(4))-methyltransferase RsmH"/>
    <property type="match status" value="1"/>
</dbReference>
<dbReference type="PANTHER" id="PTHR11265:SF0">
    <property type="entry name" value="12S RRNA N4-METHYLCYTIDINE METHYLTRANSFERASE"/>
    <property type="match status" value="1"/>
</dbReference>
<dbReference type="PANTHER" id="PTHR11265">
    <property type="entry name" value="S-ADENOSYL-METHYLTRANSFERASE MRAW"/>
    <property type="match status" value="1"/>
</dbReference>
<dbReference type="Pfam" id="PF01795">
    <property type="entry name" value="Methyltransf_5"/>
    <property type="match status" value="1"/>
</dbReference>
<dbReference type="PIRSF" id="PIRSF004486">
    <property type="entry name" value="MraW"/>
    <property type="match status" value="1"/>
</dbReference>
<dbReference type="SUPFAM" id="SSF81799">
    <property type="entry name" value="Putative methyltransferase TM0872, insert domain"/>
    <property type="match status" value="1"/>
</dbReference>
<dbReference type="SUPFAM" id="SSF53335">
    <property type="entry name" value="S-adenosyl-L-methionine-dependent methyltransferases"/>
    <property type="match status" value="1"/>
</dbReference>
<accession>P60395</accession>
<gene>
    <name evidence="1" type="primary">rsmH</name>
    <name type="synonym">mraW</name>
    <name type="ordered locus">DIP1606</name>
</gene>
<sequence>MTHGEPQEFSFDVEENHGHVPVLRARMAELIAPKVTAMGSDAVIIDGTLGAGGHSKYFLESFPEARVIGLDRDTNSLASARERLKEFGDRFLGIHTRFDRFAPKLEELAQSGNPIAATALEQGISGALFDLGVSSMQLDQAERGFAYRVDAPLDMRMDNTIGITAADVLNTYSHGELARILKTYGDERFAGKIASAIVREREKEPFDTSARLVELLYATIPAATRRTGGHPAKRTFQALRIEVNRELESLENVLPEITQRLTTGGRAVFMSYQSLEDKIVKRYFVDISTSKTPPGLPMELPEYAPKFKVVTRGAEKATDAEIEENPRAASVRVRAIEAL</sequence>
<proteinExistence type="inferred from homology"/>
<keyword id="KW-0963">Cytoplasm</keyword>
<keyword id="KW-0489">Methyltransferase</keyword>
<keyword id="KW-1185">Reference proteome</keyword>
<keyword id="KW-0698">rRNA processing</keyword>
<keyword id="KW-0949">S-adenosyl-L-methionine</keyword>
<keyword id="KW-0808">Transferase</keyword>
<comment type="function">
    <text evidence="1">Specifically methylates the N4 position of cytidine in position 1402 (C1402) of 16S rRNA.</text>
</comment>
<comment type="catalytic activity">
    <reaction evidence="1">
        <text>cytidine(1402) in 16S rRNA + S-adenosyl-L-methionine = N(4)-methylcytidine(1402) in 16S rRNA + S-adenosyl-L-homocysteine + H(+)</text>
        <dbReference type="Rhea" id="RHEA:42928"/>
        <dbReference type="Rhea" id="RHEA-COMP:10286"/>
        <dbReference type="Rhea" id="RHEA-COMP:10287"/>
        <dbReference type="ChEBI" id="CHEBI:15378"/>
        <dbReference type="ChEBI" id="CHEBI:57856"/>
        <dbReference type="ChEBI" id="CHEBI:59789"/>
        <dbReference type="ChEBI" id="CHEBI:74506"/>
        <dbReference type="ChEBI" id="CHEBI:82748"/>
        <dbReference type="EC" id="2.1.1.199"/>
    </reaction>
</comment>
<comment type="subcellular location">
    <subcellularLocation>
        <location evidence="1">Cytoplasm</location>
    </subcellularLocation>
</comment>
<comment type="similarity">
    <text evidence="1">Belongs to the methyltransferase superfamily. RsmH family.</text>
</comment>
<feature type="chain" id="PRO_0000108613" description="Ribosomal RNA small subunit methyltransferase H">
    <location>
        <begin position="1"/>
        <end position="339"/>
    </location>
</feature>
<feature type="binding site" evidence="1">
    <location>
        <begin position="52"/>
        <end position="54"/>
    </location>
    <ligand>
        <name>S-adenosyl-L-methionine</name>
        <dbReference type="ChEBI" id="CHEBI:59789"/>
    </ligand>
</feature>
<feature type="binding site" evidence="1">
    <location>
        <position position="71"/>
    </location>
    <ligand>
        <name>S-adenosyl-L-methionine</name>
        <dbReference type="ChEBI" id="CHEBI:59789"/>
    </ligand>
</feature>
<feature type="binding site" evidence="1">
    <location>
        <position position="98"/>
    </location>
    <ligand>
        <name>S-adenosyl-L-methionine</name>
        <dbReference type="ChEBI" id="CHEBI:59789"/>
    </ligand>
</feature>
<feature type="binding site" evidence="1">
    <location>
        <position position="130"/>
    </location>
    <ligand>
        <name>S-adenosyl-L-methionine</name>
        <dbReference type="ChEBI" id="CHEBI:59789"/>
    </ligand>
</feature>
<feature type="binding site" evidence="1">
    <location>
        <position position="137"/>
    </location>
    <ligand>
        <name>S-adenosyl-L-methionine</name>
        <dbReference type="ChEBI" id="CHEBI:59789"/>
    </ligand>
</feature>
<reference key="1">
    <citation type="journal article" date="2003" name="Nucleic Acids Res.">
        <title>The complete genome sequence and analysis of Corynebacterium diphtheriae NCTC13129.</title>
        <authorList>
            <person name="Cerdeno-Tarraga A.-M."/>
            <person name="Efstratiou A."/>
            <person name="Dover L.G."/>
            <person name="Holden M.T.G."/>
            <person name="Pallen M.J."/>
            <person name="Bentley S.D."/>
            <person name="Besra G.S."/>
            <person name="Churcher C.M."/>
            <person name="James K.D."/>
            <person name="De Zoysa A."/>
            <person name="Chillingworth T."/>
            <person name="Cronin A."/>
            <person name="Dowd L."/>
            <person name="Feltwell T."/>
            <person name="Hamlin N."/>
            <person name="Holroyd S."/>
            <person name="Jagels K."/>
            <person name="Moule S."/>
            <person name="Quail M.A."/>
            <person name="Rabbinowitsch E."/>
            <person name="Rutherford K.M."/>
            <person name="Thomson N.R."/>
            <person name="Unwin L."/>
            <person name="Whitehead S."/>
            <person name="Barrell B.G."/>
            <person name="Parkhill J."/>
        </authorList>
    </citation>
    <scope>NUCLEOTIDE SEQUENCE [LARGE SCALE GENOMIC DNA]</scope>
    <source>
        <strain>ATCC 700971 / NCTC 13129 / Biotype gravis</strain>
    </source>
</reference>
<evidence type="ECO:0000255" key="1">
    <source>
        <dbReference type="HAMAP-Rule" id="MF_01007"/>
    </source>
</evidence>
<protein>
    <recommendedName>
        <fullName evidence="1">Ribosomal RNA small subunit methyltransferase H</fullName>
        <ecNumber evidence="1">2.1.1.199</ecNumber>
    </recommendedName>
    <alternativeName>
        <fullName evidence="1">16S rRNA m(4)C1402 methyltransferase</fullName>
    </alternativeName>
    <alternativeName>
        <fullName evidence="1">rRNA (cytosine-N(4)-)-methyltransferase RsmH</fullName>
    </alternativeName>
</protein>